<feature type="chain" id="PRO_0000399819" description="Zinc finger protein 711">
    <location>
        <begin position="1"/>
        <end position="761"/>
    </location>
</feature>
<feature type="zinc finger region" description="C2H2-type 1" evidence="3">
    <location>
        <begin position="383"/>
        <end position="408"/>
    </location>
</feature>
<feature type="zinc finger region" description="C2H2-type 2" evidence="3">
    <location>
        <begin position="414"/>
        <end position="436"/>
    </location>
</feature>
<feature type="zinc finger region" description="C2H2-type 3" evidence="3">
    <location>
        <begin position="476"/>
        <end position="499"/>
    </location>
</feature>
<feature type="zinc finger region" description="C2H2-type 4" evidence="3">
    <location>
        <begin position="505"/>
        <end position="527"/>
    </location>
</feature>
<feature type="zinc finger region" description="C2H2-type 5" evidence="3">
    <location>
        <begin position="533"/>
        <end position="556"/>
    </location>
</feature>
<feature type="zinc finger region" description="C2H2-type 6; atypical" evidence="2">
    <location>
        <begin position="562"/>
        <end position="584"/>
    </location>
</feature>
<feature type="zinc finger region" description="C2H2-type 7" evidence="3">
    <location>
        <begin position="590"/>
        <end position="613"/>
    </location>
</feature>
<feature type="zinc finger region" description="C2H2-type 8" evidence="3">
    <location>
        <begin position="619"/>
        <end position="641"/>
    </location>
</feature>
<feature type="zinc finger region" description="C2H2-type 9" evidence="3">
    <location>
        <begin position="647"/>
        <end position="670"/>
    </location>
</feature>
<feature type="zinc finger region" description="C2H2-type 10" evidence="3">
    <location>
        <begin position="676"/>
        <end position="698"/>
    </location>
</feature>
<feature type="zinc finger region" description="C2H2-type 11" evidence="3">
    <location>
        <begin position="704"/>
        <end position="727"/>
    </location>
</feature>
<feature type="zinc finger region" description="C2H2-type 12" evidence="3">
    <location>
        <begin position="733"/>
        <end position="755"/>
    </location>
</feature>
<feature type="binding site" evidence="2">
    <location>
        <position position="564"/>
    </location>
    <ligand>
        <name>Zn(2+)</name>
        <dbReference type="ChEBI" id="CHEBI:29105"/>
    </ligand>
</feature>
<feature type="binding site" evidence="2">
    <location>
        <position position="567"/>
    </location>
    <ligand>
        <name>Zn(2+)</name>
        <dbReference type="ChEBI" id="CHEBI:29105"/>
    </ligand>
</feature>
<feature type="binding site" evidence="2">
    <location>
        <position position="580"/>
    </location>
    <ligand>
        <name>Zn(2+)</name>
        <dbReference type="ChEBI" id="CHEBI:29105"/>
    </ligand>
</feature>
<feature type="cross-link" description="Glycyl lysine isopeptide (Lys-Gly) (interchain with G-Cter in SUMO2)" evidence="2">
    <location>
        <position position="224"/>
    </location>
</feature>
<feature type="cross-link" description="Glycyl lysine isopeptide (Lys-Gly) (interchain with G-Cter in SUMO2)" evidence="2">
    <location>
        <position position="235"/>
    </location>
</feature>
<feature type="cross-link" description="Glycyl lysine isopeptide (Lys-Gly) (interchain with G-Cter in SUMO2)" evidence="2">
    <location>
        <position position="296"/>
    </location>
</feature>
<reference key="1">
    <citation type="journal article" date="2009" name="PLoS Biol.">
        <title>Lineage-specific biology revealed by a finished genome assembly of the mouse.</title>
        <authorList>
            <person name="Church D.M."/>
            <person name="Goodstadt L."/>
            <person name="Hillier L.W."/>
            <person name="Zody M.C."/>
            <person name="Goldstein S."/>
            <person name="She X."/>
            <person name="Bult C.J."/>
            <person name="Agarwala R."/>
            <person name="Cherry J.L."/>
            <person name="DiCuccio M."/>
            <person name="Hlavina W."/>
            <person name="Kapustin Y."/>
            <person name="Meric P."/>
            <person name="Maglott D."/>
            <person name="Birtle Z."/>
            <person name="Marques A.C."/>
            <person name="Graves T."/>
            <person name="Zhou S."/>
            <person name="Teague B."/>
            <person name="Potamousis K."/>
            <person name="Churas C."/>
            <person name="Place M."/>
            <person name="Herschleb J."/>
            <person name="Runnheim R."/>
            <person name="Forrest D."/>
            <person name="Amos-Landgraf J."/>
            <person name="Schwartz D.C."/>
            <person name="Cheng Z."/>
            <person name="Lindblad-Toh K."/>
            <person name="Eichler E.E."/>
            <person name="Ponting C.P."/>
        </authorList>
    </citation>
    <scope>NUCLEOTIDE SEQUENCE [LARGE SCALE GENOMIC DNA]</scope>
    <source>
        <strain>C57BL/6J</strain>
    </source>
</reference>
<gene>
    <name type="primary">Znf711</name>
    <name type="synonym">Zfp711</name>
</gene>
<accession>A2ANX9</accession>
<comment type="function">
    <text evidence="2">Transcription regulator required for brain development. Probably acts as a transcription factor that binds to the promoter of target genes and recruits PHF8 histone demethylase, leading to activated expression of genes involved in neuron development, such as KDM5C. May compete with transcription factor ARX for activation of expression of KDM5C.</text>
</comment>
<comment type="subunit">
    <text evidence="1">Interacts with PHF8.</text>
</comment>
<comment type="subcellular location">
    <subcellularLocation>
        <location evidence="1">Nucleus</location>
    </subcellularLocation>
</comment>
<comment type="domain">
    <text evidence="2">The sixth zinc finger contains a Phe residue, Phe-584, instead of the final His residue normally found in C2H2-type zinc fingers. There is another His residue a few residues downstream, His-587, but this is not involved in coordinating zinc. Despite the His to Phe substitution, the zinc finger retains the ability to bind zinc using a tridentate metal-binding site of Cys-564, Cys-567 and His-580. The zinc finger also has hydrolytic activity against 4-nitrophenyl acetate.</text>
</comment>
<comment type="similarity">
    <text evidence="4">Belongs to the krueppel C2H2-type zinc-finger protein family.</text>
</comment>
<keyword id="KW-0238">DNA-binding</keyword>
<keyword id="KW-1017">Isopeptide bond</keyword>
<keyword id="KW-0479">Metal-binding</keyword>
<keyword id="KW-0539">Nucleus</keyword>
<keyword id="KW-1185">Reference proteome</keyword>
<keyword id="KW-0677">Repeat</keyword>
<keyword id="KW-0804">Transcription</keyword>
<keyword id="KW-0805">Transcription regulation</keyword>
<keyword id="KW-0832">Ubl conjugation</keyword>
<keyword id="KW-0862">Zinc</keyword>
<keyword id="KW-0863">Zinc-finger</keyword>
<protein>
    <recommendedName>
        <fullName>Zinc finger protein 711</fullName>
    </recommendedName>
</protein>
<dbReference type="EMBL" id="AL831771">
    <property type="status" value="NOT_ANNOTATED_CDS"/>
    <property type="molecule type" value="Genomic_DNA"/>
</dbReference>
<dbReference type="SMR" id="A2ANX9"/>
<dbReference type="FunCoup" id="A2ANX9">
    <property type="interactions" value="1193"/>
</dbReference>
<dbReference type="STRING" id="10090.ENSMUSP00000109036"/>
<dbReference type="iPTMnet" id="A2ANX9"/>
<dbReference type="PhosphoSitePlus" id="A2ANX9"/>
<dbReference type="PaxDb" id="10090-ENSMUSP00000109036"/>
<dbReference type="PeptideAtlas" id="A2ANX9"/>
<dbReference type="ProteomicsDB" id="302142"/>
<dbReference type="AGR" id="MGI:3045342"/>
<dbReference type="MGI" id="MGI:3045342">
    <property type="gene designation" value="Zfp711"/>
</dbReference>
<dbReference type="eggNOG" id="KOG1721">
    <property type="taxonomic scope" value="Eukaryota"/>
</dbReference>
<dbReference type="InParanoid" id="A2ANX9"/>
<dbReference type="Reactome" id="R-MMU-212436">
    <property type="pathway name" value="Generic Transcription Pathway"/>
</dbReference>
<dbReference type="ChiTaRS" id="Zfp711">
    <property type="organism name" value="mouse"/>
</dbReference>
<dbReference type="PRO" id="PR:A2ANX9"/>
<dbReference type="Proteomes" id="UP000000589">
    <property type="component" value="Unplaced"/>
</dbReference>
<dbReference type="RNAct" id="A2ANX9">
    <property type="molecule type" value="protein"/>
</dbReference>
<dbReference type="GO" id="GO:0005634">
    <property type="term" value="C:nucleus"/>
    <property type="evidence" value="ECO:0000250"/>
    <property type="project" value="UniProtKB"/>
</dbReference>
<dbReference type="GO" id="GO:0043565">
    <property type="term" value="F:sequence-specific DNA binding"/>
    <property type="evidence" value="ECO:0000250"/>
    <property type="project" value="UniProtKB"/>
</dbReference>
<dbReference type="GO" id="GO:0008270">
    <property type="term" value="F:zinc ion binding"/>
    <property type="evidence" value="ECO:0000250"/>
    <property type="project" value="UniProtKB"/>
</dbReference>
<dbReference type="GO" id="GO:0045893">
    <property type="term" value="P:positive regulation of DNA-templated transcription"/>
    <property type="evidence" value="ECO:0000250"/>
    <property type="project" value="UniProtKB"/>
</dbReference>
<dbReference type="FunFam" id="3.30.160.60:FF:000054">
    <property type="entry name" value="Zinc finger protein 711"/>
    <property type="match status" value="1"/>
</dbReference>
<dbReference type="FunFam" id="3.30.160.60:FF:000179">
    <property type="entry name" value="Zinc finger protein 711"/>
    <property type="match status" value="1"/>
</dbReference>
<dbReference type="FunFam" id="3.30.160.60:FF:000209">
    <property type="entry name" value="Zinc finger protein 711"/>
    <property type="match status" value="2"/>
</dbReference>
<dbReference type="FunFam" id="3.30.160.60:FF:000587">
    <property type="entry name" value="Zinc finger protein 711"/>
    <property type="match status" value="1"/>
</dbReference>
<dbReference type="FunFam" id="3.30.160.60:FF:000170">
    <property type="entry name" value="Zinc finger protein 711 isoform X2"/>
    <property type="match status" value="1"/>
</dbReference>
<dbReference type="Gene3D" id="3.30.160.60">
    <property type="entry name" value="Classic Zinc Finger"/>
    <property type="match status" value="7"/>
</dbReference>
<dbReference type="InterPro" id="IPR050752">
    <property type="entry name" value="C2H2-ZF_domain"/>
</dbReference>
<dbReference type="InterPro" id="IPR006794">
    <property type="entry name" value="Transcrp_activ_Zfx/Zfy-dom"/>
</dbReference>
<dbReference type="InterPro" id="IPR036236">
    <property type="entry name" value="Znf_C2H2_sf"/>
</dbReference>
<dbReference type="InterPro" id="IPR013087">
    <property type="entry name" value="Znf_C2H2_type"/>
</dbReference>
<dbReference type="PANTHER" id="PTHR24384:SF189">
    <property type="entry name" value="C2H2-TYPE DOMAIN-CONTAINING PROTEIN-RELATED"/>
    <property type="match status" value="1"/>
</dbReference>
<dbReference type="PANTHER" id="PTHR24384">
    <property type="entry name" value="FINGER PUTATIVE TRANSCRIPTION FACTOR FAMILY-RELATED"/>
    <property type="match status" value="1"/>
</dbReference>
<dbReference type="Pfam" id="PF00096">
    <property type="entry name" value="zf-C2H2"/>
    <property type="match status" value="8"/>
</dbReference>
<dbReference type="Pfam" id="PF04704">
    <property type="entry name" value="Zfx_Zfy_act"/>
    <property type="match status" value="2"/>
</dbReference>
<dbReference type="SMART" id="SM00355">
    <property type="entry name" value="ZnF_C2H2"/>
    <property type="match status" value="12"/>
</dbReference>
<dbReference type="SUPFAM" id="SSF57667">
    <property type="entry name" value="beta-beta-alpha zinc fingers"/>
    <property type="match status" value="6"/>
</dbReference>
<dbReference type="PROSITE" id="PS00028">
    <property type="entry name" value="ZINC_FINGER_C2H2_1"/>
    <property type="match status" value="6"/>
</dbReference>
<dbReference type="PROSITE" id="PS50157">
    <property type="entry name" value="ZINC_FINGER_C2H2_2"/>
    <property type="match status" value="10"/>
</dbReference>
<proteinExistence type="inferred from homology"/>
<evidence type="ECO:0000250" key="1"/>
<evidence type="ECO:0000250" key="2">
    <source>
        <dbReference type="UniProtKB" id="Q9Y462"/>
    </source>
</evidence>
<evidence type="ECO:0000255" key="3">
    <source>
        <dbReference type="PROSITE-ProRule" id="PRU00042"/>
    </source>
</evidence>
<evidence type="ECO:0000305" key="4"/>
<organism>
    <name type="scientific">Mus musculus</name>
    <name type="common">Mouse</name>
    <dbReference type="NCBI Taxonomy" id="10090"/>
    <lineage>
        <taxon>Eukaryota</taxon>
        <taxon>Metazoa</taxon>
        <taxon>Chordata</taxon>
        <taxon>Craniata</taxon>
        <taxon>Vertebrata</taxon>
        <taxon>Euteleostomi</taxon>
        <taxon>Mammalia</taxon>
        <taxon>Eutheria</taxon>
        <taxon>Euarchontoglires</taxon>
        <taxon>Glires</taxon>
        <taxon>Rodentia</taxon>
        <taxon>Myomorpha</taxon>
        <taxon>Muroidea</taxon>
        <taxon>Muridae</taxon>
        <taxon>Murinae</taxon>
        <taxon>Mus</taxon>
        <taxon>Mus</taxon>
    </lineage>
</organism>
<sequence length="761" mass="86415">MESGGGSLGLHTSDARMAHTMIMQDFVAGMAGTAHIDGDHIVVSVPEAVLVSDVVTDDGITLDHGLAAEVVHGPDIITETDVVTEGVIVPEAVLEADVAIEEDLEEDDGDHILTSELITETVRVPEQVFVADLVSGPDGHLEHVVQDCVSGVDSPTMVSEEVLVTNSDTETVIQAGGGVPGSTVTIKTEEDDDDDVKSTSEDYLMISLDDVGEKLEHMGNTPLKIASDGSQEDVKEDAFGSEVIKVYIFKAEAEDDVEIGGTEIVTESEYSSGHSVAGVLDQSRMQREKMVYMAVKDSSQEQDDIRDERRVSRRYEECQAPGNTFDSALENRNTTAAQYLQICDSMNTNKVLKQKIKKRRRGETRQWQTAVIIGPDGQPLTVYPCHICTKKFKSRGFLKRHMKNHPDHLMRKKYQCTDCDFTTNKKVSFHNHLESHKLINKVDKTHEFTEYTRRYREASPLSSNKLILRDKEPKMHKCKYCDYETAEQGLLNRHLLAVHSKSFPHVCVECGKGFRHPSELKKHMRTHTGEKPYQCQYCAFRCADQSNLKTHIKSKHGSNLPYKCEHCPQAFGDERELQRHLDLFQGHKTHQCPHCDHKSTNSSDLKRHIISVHTKDFPHKCEVCDKGFHRPSELKKHSDIHKGRKIHQCRHCDFKTSDPFILSGHILSVHTKDQSLKCKRCKRGFRQQNELKKHMKTHTGRKIYQCEYCEYSTTDASGFKRHVISIHTKDYPHRCEFCKKGFRRPSEKKQHIMRHHKETLM</sequence>
<name>ZN711_MOUSE</name>